<accession>Q0SZY2</accession>
<name>RS10_SHIF8</name>
<protein>
    <recommendedName>
        <fullName evidence="1">Small ribosomal subunit protein uS10</fullName>
    </recommendedName>
    <alternativeName>
        <fullName evidence="2">30S ribosomal protein S10</fullName>
    </alternativeName>
</protein>
<evidence type="ECO:0000255" key="1">
    <source>
        <dbReference type="HAMAP-Rule" id="MF_00508"/>
    </source>
</evidence>
<evidence type="ECO:0000305" key="2"/>
<gene>
    <name evidence="1" type="primary">rpsJ</name>
    <name type="ordered locus">SFV_3340</name>
</gene>
<reference key="1">
    <citation type="journal article" date="2006" name="BMC Genomics">
        <title>Complete genome sequence of Shigella flexneri 5b and comparison with Shigella flexneri 2a.</title>
        <authorList>
            <person name="Nie H."/>
            <person name="Yang F."/>
            <person name="Zhang X."/>
            <person name="Yang J."/>
            <person name="Chen L."/>
            <person name="Wang J."/>
            <person name="Xiong Z."/>
            <person name="Peng J."/>
            <person name="Sun L."/>
            <person name="Dong J."/>
            <person name="Xue Y."/>
            <person name="Xu X."/>
            <person name="Chen S."/>
            <person name="Yao Z."/>
            <person name="Shen Y."/>
            <person name="Jin Q."/>
        </authorList>
    </citation>
    <scope>NUCLEOTIDE SEQUENCE [LARGE SCALE GENOMIC DNA]</scope>
    <source>
        <strain>8401</strain>
    </source>
</reference>
<comment type="function">
    <text evidence="1">Involved in the binding of tRNA to the ribosomes.</text>
</comment>
<comment type="subunit">
    <text evidence="1">Part of the 30S ribosomal subunit.</text>
</comment>
<comment type="similarity">
    <text evidence="1">Belongs to the universal ribosomal protein uS10 family.</text>
</comment>
<feature type="chain" id="PRO_1000015117" description="Small ribosomal subunit protein uS10">
    <location>
        <begin position="1"/>
        <end position="103"/>
    </location>
</feature>
<organism>
    <name type="scientific">Shigella flexneri serotype 5b (strain 8401)</name>
    <dbReference type="NCBI Taxonomy" id="373384"/>
    <lineage>
        <taxon>Bacteria</taxon>
        <taxon>Pseudomonadati</taxon>
        <taxon>Pseudomonadota</taxon>
        <taxon>Gammaproteobacteria</taxon>
        <taxon>Enterobacterales</taxon>
        <taxon>Enterobacteriaceae</taxon>
        <taxon>Shigella</taxon>
    </lineage>
</organism>
<keyword id="KW-0687">Ribonucleoprotein</keyword>
<keyword id="KW-0689">Ribosomal protein</keyword>
<sequence>MQNQRIRIRLKAFDHRLIDQATAEIVETAKRTGAQVRGPIPLPTRKERFTVLISPHVNKDARDQYEIRTHLRLVDIVEPTEKTVDALMRLDLAAGVDVQISLG</sequence>
<proteinExistence type="inferred from homology"/>
<dbReference type="EMBL" id="CP000266">
    <property type="protein sequence ID" value="ABF05383.1"/>
    <property type="molecule type" value="Genomic_DNA"/>
</dbReference>
<dbReference type="RefSeq" id="WP_001181004.1">
    <property type="nucleotide sequence ID" value="NC_008258.1"/>
</dbReference>
<dbReference type="SMR" id="Q0SZY2"/>
<dbReference type="GeneID" id="93778666"/>
<dbReference type="KEGG" id="sfv:SFV_3340"/>
<dbReference type="HOGENOM" id="CLU_122625_1_3_6"/>
<dbReference type="Proteomes" id="UP000000659">
    <property type="component" value="Chromosome"/>
</dbReference>
<dbReference type="GO" id="GO:1990904">
    <property type="term" value="C:ribonucleoprotein complex"/>
    <property type="evidence" value="ECO:0007669"/>
    <property type="project" value="UniProtKB-KW"/>
</dbReference>
<dbReference type="GO" id="GO:0005840">
    <property type="term" value="C:ribosome"/>
    <property type="evidence" value="ECO:0007669"/>
    <property type="project" value="UniProtKB-KW"/>
</dbReference>
<dbReference type="GO" id="GO:0003735">
    <property type="term" value="F:structural constituent of ribosome"/>
    <property type="evidence" value="ECO:0007669"/>
    <property type="project" value="InterPro"/>
</dbReference>
<dbReference type="GO" id="GO:0000049">
    <property type="term" value="F:tRNA binding"/>
    <property type="evidence" value="ECO:0007669"/>
    <property type="project" value="UniProtKB-UniRule"/>
</dbReference>
<dbReference type="GO" id="GO:0006412">
    <property type="term" value="P:translation"/>
    <property type="evidence" value="ECO:0007669"/>
    <property type="project" value="UniProtKB-UniRule"/>
</dbReference>
<dbReference type="FunFam" id="3.30.70.600:FF:000001">
    <property type="entry name" value="30S ribosomal protein S10"/>
    <property type="match status" value="1"/>
</dbReference>
<dbReference type="Gene3D" id="3.30.70.600">
    <property type="entry name" value="Ribosomal protein S10 domain"/>
    <property type="match status" value="1"/>
</dbReference>
<dbReference type="HAMAP" id="MF_00508">
    <property type="entry name" value="Ribosomal_uS10"/>
    <property type="match status" value="1"/>
</dbReference>
<dbReference type="InterPro" id="IPR001848">
    <property type="entry name" value="Ribosomal_uS10"/>
</dbReference>
<dbReference type="InterPro" id="IPR018268">
    <property type="entry name" value="Ribosomal_uS10_CS"/>
</dbReference>
<dbReference type="InterPro" id="IPR027486">
    <property type="entry name" value="Ribosomal_uS10_dom"/>
</dbReference>
<dbReference type="InterPro" id="IPR036838">
    <property type="entry name" value="Ribosomal_uS10_dom_sf"/>
</dbReference>
<dbReference type="NCBIfam" id="NF001861">
    <property type="entry name" value="PRK00596.1"/>
    <property type="match status" value="1"/>
</dbReference>
<dbReference type="NCBIfam" id="TIGR01049">
    <property type="entry name" value="rpsJ_bact"/>
    <property type="match status" value="1"/>
</dbReference>
<dbReference type="PANTHER" id="PTHR11700">
    <property type="entry name" value="30S RIBOSOMAL PROTEIN S10 FAMILY MEMBER"/>
    <property type="match status" value="1"/>
</dbReference>
<dbReference type="Pfam" id="PF00338">
    <property type="entry name" value="Ribosomal_S10"/>
    <property type="match status" value="1"/>
</dbReference>
<dbReference type="PRINTS" id="PR00971">
    <property type="entry name" value="RIBOSOMALS10"/>
</dbReference>
<dbReference type="SMART" id="SM01403">
    <property type="entry name" value="Ribosomal_S10"/>
    <property type="match status" value="1"/>
</dbReference>
<dbReference type="SUPFAM" id="SSF54999">
    <property type="entry name" value="Ribosomal protein S10"/>
    <property type="match status" value="1"/>
</dbReference>
<dbReference type="PROSITE" id="PS00361">
    <property type="entry name" value="RIBOSOMAL_S10"/>
    <property type="match status" value="1"/>
</dbReference>